<protein>
    <recommendedName>
        <fullName evidence="1">1-(5-phosphoribosyl)-5-[(5-phosphoribosylamino)methylideneamino] imidazole-4-carboxamide isomerase</fullName>
        <ecNumber evidence="1">5.3.1.16</ecNumber>
    </recommendedName>
    <alternativeName>
        <fullName evidence="1">Phosphoribosylformimino-5-aminoimidazole carboxamide ribotide isomerase</fullName>
    </alternativeName>
</protein>
<reference key="1">
    <citation type="journal article" date="2011" name="J. Bacteriol.">
        <title>Comparative genomics of 28 Salmonella enterica isolates: evidence for CRISPR-mediated adaptive sublineage evolution.</title>
        <authorList>
            <person name="Fricke W.F."/>
            <person name="Mammel M.K."/>
            <person name="McDermott P.F."/>
            <person name="Tartera C."/>
            <person name="White D.G."/>
            <person name="Leclerc J.E."/>
            <person name="Ravel J."/>
            <person name="Cebula T.A."/>
        </authorList>
    </citation>
    <scope>NUCLEOTIDE SEQUENCE [LARGE SCALE GENOMIC DNA]</scope>
    <source>
        <strain>SL476</strain>
    </source>
</reference>
<proteinExistence type="inferred from homology"/>
<name>HIS4_SALHS</name>
<evidence type="ECO:0000255" key="1">
    <source>
        <dbReference type="HAMAP-Rule" id="MF_01014"/>
    </source>
</evidence>
<keyword id="KW-0028">Amino-acid biosynthesis</keyword>
<keyword id="KW-0963">Cytoplasm</keyword>
<keyword id="KW-0368">Histidine biosynthesis</keyword>
<keyword id="KW-0413">Isomerase</keyword>
<sequence length="245" mass="26089">MIIPALDLIDGTVVRLHQGDYARQRDYGNDPLPRLQDYAAQGAGVLHLVDLTGAKDPAKRQIPLIKTLVAGVNVPVQVGGGVRTEEDVAALLKAGVARVVIGSTAVKSPDVVKGWFERFGAQALVLALDVRIDEHGTKQVAVSGWQENSGVSLEQLVETYLPVGLKHVLCTDISRDGTLAGSNVSLYEEVCARYPQIAFQSSGGIGDIDDIAALRGTGVRGVIVGRALLEGKFTVKEAIQCWQNV</sequence>
<gene>
    <name evidence="1" type="primary">hisA</name>
    <name type="ordered locus">SeHA_C2302</name>
</gene>
<comment type="catalytic activity">
    <reaction evidence="1">
        <text>1-(5-phospho-beta-D-ribosyl)-5-[(5-phospho-beta-D-ribosylamino)methylideneamino]imidazole-4-carboxamide = 5-[(5-phospho-1-deoxy-D-ribulos-1-ylimino)methylamino]-1-(5-phospho-beta-D-ribosyl)imidazole-4-carboxamide</text>
        <dbReference type="Rhea" id="RHEA:15469"/>
        <dbReference type="ChEBI" id="CHEBI:58435"/>
        <dbReference type="ChEBI" id="CHEBI:58525"/>
        <dbReference type="EC" id="5.3.1.16"/>
    </reaction>
</comment>
<comment type="pathway">
    <text evidence="1">Amino-acid biosynthesis; L-histidine biosynthesis; L-histidine from 5-phospho-alpha-D-ribose 1-diphosphate: step 4/9.</text>
</comment>
<comment type="subcellular location">
    <subcellularLocation>
        <location evidence="1">Cytoplasm</location>
    </subcellularLocation>
</comment>
<comment type="similarity">
    <text evidence="1">Belongs to the HisA/HisF family.</text>
</comment>
<organism>
    <name type="scientific">Salmonella heidelberg (strain SL476)</name>
    <dbReference type="NCBI Taxonomy" id="454169"/>
    <lineage>
        <taxon>Bacteria</taxon>
        <taxon>Pseudomonadati</taxon>
        <taxon>Pseudomonadota</taxon>
        <taxon>Gammaproteobacteria</taxon>
        <taxon>Enterobacterales</taxon>
        <taxon>Enterobacteriaceae</taxon>
        <taxon>Salmonella</taxon>
    </lineage>
</organism>
<accession>B4T9N8</accession>
<dbReference type="EC" id="5.3.1.16" evidence="1"/>
<dbReference type="EMBL" id="CP001120">
    <property type="protein sequence ID" value="ACF67763.1"/>
    <property type="molecule type" value="Genomic_DNA"/>
</dbReference>
<dbReference type="RefSeq" id="WP_000586409.1">
    <property type="nucleotide sequence ID" value="NC_011083.1"/>
</dbReference>
<dbReference type="SMR" id="B4T9N8"/>
<dbReference type="KEGG" id="seh:SeHA_C2302"/>
<dbReference type="HOGENOM" id="CLU_048577_1_2_6"/>
<dbReference type="UniPathway" id="UPA00031">
    <property type="reaction ID" value="UER00009"/>
</dbReference>
<dbReference type="Proteomes" id="UP000001866">
    <property type="component" value="Chromosome"/>
</dbReference>
<dbReference type="GO" id="GO:0005737">
    <property type="term" value="C:cytoplasm"/>
    <property type="evidence" value="ECO:0007669"/>
    <property type="project" value="UniProtKB-SubCell"/>
</dbReference>
<dbReference type="GO" id="GO:0003949">
    <property type="term" value="F:1-(5-phosphoribosyl)-5-[(5-phosphoribosylamino)methylideneamino]imidazole-4-carboxamide isomerase activity"/>
    <property type="evidence" value="ECO:0007669"/>
    <property type="project" value="UniProtKB-UniRule"/>
</dbReference>
<dbReference type="GO" id="GO:0000105">
    <property type="term" value="P:L-histidine biosynthetic process"/>
    <property type="evidence" value="ECO:0007669"/>
    <property type="project" value="UniProtKB-UniRule"/>
</dbReference>
<dbReference type="GO" id="GO:0000162">
    <property type="term" value="P:L-tryptophan biosynthetic process"/>
    <property type="evidence" value="ECO:0007669"/>
    <property type="project" value="TreeGrafter"/>
</dbReference>
<dbReference type="CDD" id="cd04732">
    <property type="entry name" value="HisA"/>
    <property type="match status" value="1"/>
</dbReference>
<dbReference type="FunFam" id="3.20.20.70:FF:000009">
    <property type="entry name" value="1-(5-phosphoribosyl)-5-[(5-phosphoribosylamino)methylideneamino] imidazole-4-carboxamide isomerase"/>
    <property type="match status" value="1"/>
</dbReference>
<dbReference type="Gene3D" id="3.20.20.70">
    <property type="entry name" value="Aldolase class I"/>
    <property type="match status" value="1"/>
</dbReference>
<dbReference type="HAMAP" id="MF_01014">
    <property type="entry name" value="HisA"/>
    <property type="match status" value="1"/>
</dbReference>
<dbReference type="InterPro" id="IPR013785">
    <property type="entry name" value="Aldolase_TIM"/>
</dbReference>
<dbReference type="InterPro" id="IPR006062">
    <property type="entry name" value="His_biosynth"/>
</dbReference>
<dbReference type="InterPro" id="IPR006063">
    <property type="entry name" value="HisA_bact_arch"/>
</dbReference>
<dbReference type="InterPro" id="IPR044524">
    <property type="entry name" value="Isoase_HisA-like"/>
</dbReference>
<dbReference type="InterPro" id="IPR023016">
    <property type="entry name" value="Isoase_HisA-like_bact"/>
</dbReference>
<dbReference type="InterPro" id="IPR011060">
    <property type="entry name" value="RibuloseP-bd_barrel"/>
</dbReference>
<dbReference type="NCBIfam" id="TIGR00007">
    <property type="entry name" value="1-(5-phosphoribosyl)-5-[(5-phosphoribosylamino)methylideneamino]imidazole-4-carboxamide isomerase"/>
    <property type="match status" value="1"/>
</dbReference>
<dbReference type="PANTHER" id="PTHR43090">
    <property type="entry name" value="1-(5-PHOSPHORIBOSYL)-5-[(5-PHOSPHORIBOSYLAMINO)METHYLIDENEAMINO] IMIDAZOLE-4-CARBOXAMIDE ISOMERASE"/>
    <property type="match status" value="1"/>
</dbReference>
<dbReference type="PANTHER" id="PTHR43090:SF2">
    <property type="entry name" value="1-(5-PHOSPHORIBOSYL)-5-[(5-PHOSPHORIBOSYLAMINO)METHYLIDENEAMINO] IMIDAZOLE-4-CARBOXAMIDE ISOMERASE"/>
    <property type="match status" value="1"/>
</dbReference>
<dbReference type="Pfam" id="PF00977">
    <property type="entry name" value="His_biosynth"/>
    <property type="match status" value="1"/>
</dbReference>
<dbReference type="SUPFAM" id="SSF51366">
    <property type="entry name" value="Ribulose-phoshate binding barrel"/>
    <property type="match status" value="1"/>
</dbReference>
<feature type="chain" id="PRO_1000190553" description="1-(5-phosphoribosyl)-5-[(5-phosphoribosylamino)methylideneamino] imidazole-4-carboxamide isomerase">
    <location>
        <begin position="1"/>
        <end position="245"/>
    </location>
</feature>
<feature type="active site" description="Proton acceptor" evidence="1">
    <location>
        <position position="7"/>
    </location>
</feature>
<feature type="active site" description="Proton donor" evidence="1">
    <location>
        <position position="129"/>
    </location>
</feature>